<evidence type="ECO:0000255" key="1">
    <source>
        <dbReference type="HAMAP-Rule" id="MF_01013"/>
    </source>
</evidence>
<reference key="1">
    <citation type="journal article" date="2011" name="Stand. Genomic Sci.">
        <title>Complete genome sequence of the filamentous gliding predatory bacterium Herpetosiphon aurantiacus type strain (114-95(T)).</title>
        <authorList>
            <person name="Kiss H."/>
            <person name="Nett M."/>
            <person name="Domin N."/>
            <person name="Martin K."/>
            <person name="Maresca J.A."/>
            <person name="Copeland A."/>
            <person name="Lapidus A."/>
            <person name="Lucas S."/>
            <person name="Berry K.W."/>
            <person name="Glavina Del Rio T."/>
            <person name="Dalin E."/>
            <person name="Tice H."/>
            <person name="Pitluck S."/>
            <person name="Richardson P."/>
            <person name="Bruce D."/>
            <person name="Goodwin L."/>
            <person name="Han C."/>
            <person name="Detter J.C."/>
            <person name="Schmutz J."/>
            <person name="Brettin T."/>
            <person name="Land M."/>
            <person name="Hauser L."/>
            <person name="Kyrpides N.C."/>
            <person name="Ivanova N."/>
            <person name="Goeker M."/>
            <person name="Woyke T."/>
            <person name="Klenk H.P."/>
            <person name="Bryant D.A."/>
        </authorList>
    </citation>
    <scope>NUCLEOTIDE SEQUENCE [LARGE SCALE GENOMIC DNA]</scope>
    <source>
        <strain>ATCC 23779 / DSM 785 / 114-95</strain>
    </source>
</reference>
<keyword id="KW-0028">Amino-acid biosynthesis</keyword>
<keyword id="KW-0963">Cytoplasm</keyword>
<keyword id="KW-0368">Histidine biosynthesis</keyword>
<keyword id="KW-0456">Lyase</keyword>
<organism>
    <name type="scientific">Herpetosiphon aurantiacus (strain ATCC 23779 / DSM 785 / 114-95)</name>
    <dbReference type="NCBI Taxonomy" id="316274"/>
    <lineage>
        <taxon>Bacteria</taxon>
        <taxon>Bacillati</taxon>
        <taxon>Chloroflexota</taxon>
        <taxon>Chloroflexia</taxon>
        <taxon>Herpetosiphonales</taxon>
        <taxon>Herpetosiphonaceae</taxon>
        <taxon>Herpetosiphon</taxon>
    </lineage>
</organism>
<name>HIS6_HERA2</name>
<feature type="chain" id="PRO_1000135008" description="Imidazole glycerol phosphate synthase subunit HisF">
    <location>
        <begin position="1"/>
        <end position="263"/>
    </location>
</feature>
<feature type="active site" evidence="1">
    <location>
        <position position="11"/>
    </location>
</feature>
<feature type="active site" evidence="1">
    <location>
        <position position="130"/>
    </location>
</feature>
<accession>A9B5I5</accession>
<proteinExistence type="inferred from homology"/>
<comment type="function">
    <text evidence="1">IGPS catalyzes the conversion of PRFAR and glutamine to IGP, AICAR and glutamate. The HisF subunit catalyzes the cyclization activity that produces IGP and AICAR from PRFAR using the ammonia provided by the HisH subunit.</text>
</comment>
<comment type="catalytic activity">
    <reaction evidence="1">
        <text>5-[(5-phospho-1-deoxy-D-ribulos-1-ylimino)methylamino]-1-(5-phospho-beta-D-ribosyl)imidazole-4-carboxamide + L-glutamine = D-erythro-1-(imidazol-4-yl)glycerol 3-phosphate + 5-amino-1-(5-phospho-beta-D-ribosyl)imidazole-4-carboxamide + L-glutamate + H(+)</text>
        <dbReference type="Rhea" id="RHEA:24793"/>
        <dbReference type="ChEBI" id="CHEBI:15378"/>
        <dbReference type="ChEBI" id="CHEBI:29985"/>
        <dbReference type="ChEBI" id="CHEBI:58278"/>
        <dbReference type="ChEBI" id="CHEBI:58359"/>
        <dbReference type="ChEBI" id="CHEBI:58475"/>
        <dbReference type="ChEBI" id="CHEBI:58525"/>
        <dbReference type="EC" id="4.3.2.10"/>
    </reaction>
</comment>
<comment type="pathway">
    <text evidence="1">Amino-acid biosynthesis; L-histidine biosynthesis; L-histidine from 5-phospho-alpha-D-ribose 1-diphosphate: step 5/9.</text>
</comment>
<comment type="subunit">
    <text evidence="1">Heterodimer of HisH and HisF.</text>
</comment>
<comment type="subcellular location">
    <subcellularLocation>
        <location evidence="1">Cytoplasm</location>
    </subcellularLocation>
</comment>
<comment type="similarity">
    <text evidence="1">Belongs to the HisA/HisF family.</text>
</comment>
<sequence>MLTRRIIPCLDVKAGRVVKGISFLNHRDAGDPVQLAAFYNESGADELVFYDITASSDERNIMVEVVENVARQVFIPLTVGGGIRTVDDMYRMLRAGADKVSINTAAVLNPQLIEDGAKRFGSQCIVLSMDARRINEPGQPSQWNVFTHTGRDPRPTGLDAIEWAKRVVDLGAGELVINSMDADGTGAGYDNELLSAISQQVGVPVIASGGAGKPEHLLAALHEGKADAVLAASIFHFGTYTVEAVKEYLANQGIPMRRTPRPV</sequence>
<dbReference type="EC" id="4.3.2.10" evidence="1"/>
<dbReference type="EMBL" id="CP000875">
    <property type="protein sequence ID" value="ABX02810.1"/>
    <property type="molecule type" value="Genomic_DNA"/>
</dbReference>
<dbReference type="SMR" id="A9B5I5"/>
<dbReference type="FunCoup" id="A9B5I5">
    <property type="interactions" value="494"/>
</dbReference>
<dbReference type="STRING" id="316274.Haur_0158"/>
<dbReference type="KEGG" id="hau:Haur_0158"/>
<dbReference type="eggNOG" id="COG0107">
    <property type="taxonomic scope" value="Bacteria"/>
</dbReference>
<dbReference type="HOGENOM" id="CLU_048577_4_0_0"/>
<dbReference type="InParanoid" id="A9B5I5"/>
<dbReference type="UniPathway" id="UPA00031">
    <property type="reaction ID" value="UER00010"/>
</dbReference>
<dbReference type="Proteomes" id="UP000000787">
    <property type="component" value="Chromosome"/>
</dbReference>
<dbReference type="GO" id="GO:0005737">
    <property type="term" value="C:cytoplasm"/>
    <property type="evidence" value="ECO:0007669"/>
    <property type="project" value="UniProtKB-SubCell"/>
</dbReference>
<dbReference type="GO" id="GO:0000107">
    <property type="term" value="F:imidazoleglycerol-phosphate synthase activity"/>
    <property type="evidence" value="ECO:0007669"/>
    <property type="project" value="UniProtKB-UniRule"/>
</dbReference>
<dbReference type="GO" id="GO:0016829">
    <property type="term" value="F:lyase activity"/>
    <property type="evidence" value="ECO:0007669"/>
    <property type="project" value="UniProtKB-KW"/>
</dbReference>
<dbReference type="GO" id="GO:0000105">
    <property type="term" value="P:L-histidine biosynthetic process"/>
    <property type="evidence" value="ECO:0007669"/>
    <property type="project" value="UniProtKB-UniRule"/>
</dbReference>
<dbReference type="CDD" id="cd04731">
    <property type="entry name" value="HisF"/>
    <property type="match status" value="1"/>
</dbReference>
<dbReference type="FunFam" id="3.20.20.70:FF:000006">
    <property type="entry name" value="Imidazole glycerol phosphate synthase subunit HisF"/>
    <property type="match status" value="1"/>
</dbReference>
<dbReference type="Gene3D" id="3.20.20.70">
    <property type="entry name" value="Aldolase class I"/>
    <property type="match status" value="1"/>
</dbReference>
<dbReference type="HAMAP" id="MF_01013">
    <property type="entry name" value="HisF"/>
    <property type="match status" value="1"/>
</dbReference>
<dbReference type="InterPro" id="IPR013785">
    <property type="entry name" value="Aldolase_TIM"/>
</dbReference>
<dbReference type="InterPro" id="IPR006062">
    <property type="entry name" value="His_biosynth"/>
</dbReference>
<dbReference type="InterPro" id="IPR004651">
    <property type="entry name" value="HisF"/>
</dbReference>
<dbReference type="InterPro" id="IPR050064">
    <property type="entry name" value="IGPS_HisA/HisF"/>
</dbReference>
<dbReference type="InterPro" id="IPR011060">
    <property type="entry name" value="RibuloseP-bd_barrel"/>
</dbReference>
<dbReference type="NCBIfam" id="TIGR00735">
    <property type="entry name" value="hisF"/>
    <property type="match status" value="1"/>
</dbReference>
<dbReference type="PANTHER" id="PTHR21235:SF2">
    <property type="entry name" value="IMIDAZOLE GLYCEROL PHOSPHATE SYNTHASE HISHF"/>
    <property type="match status" value="1"/>
</dbReference>
<dbReference type="PANTHER" id="PTHR21235">
    <property type="entry name" value="IMIDAZOLE GLYCEROL PHOSPHATE SYNTHASE SUBUNIT HISF/H IGP SYNTHASE SUBUNIT HISF/H"/>
    <property type="match status" value="1"/>
</dbReference>
<dbReference type="Pfam" id="PF00977">
    <property type="entry name" value="His_biosynth"/>
    <property type="match status" value="1"/>
</dbReference>
<dbReference type="SUPFAM" id="SSF51366">
    <property type="entry name" value="Ribulose-phoshate binding barrel"/>
    <property type="match status" value="1"/>
</dbReference>
<gene>
    <name evidence="1" type="primary">hisF</name>
    <name type="ordered locus">Haur_0158</name>
</gene>
<protein>
    <recommendedName>
        <fullName evidence="1">Imidazole glycerol phosphate synthase subunit HisF</fullName>
        <ecNumber evidence="1">4.3.2.10</ecNumber>
    </recommendedName>
    <alternativeName>
        <fullName evidence="1">IGP synthase cyclase subunit</fullName>
    </alternativeName>
    <alternativeName>
        <fullName evidence="1">IGP synthase subunit HisF</fullName>
    </alternativeName>
    <alternativeName>
        <fullName evidence="1">ImGP synthase subunit HisF</fullName>
        <shortName evidence="1">IGPS subunit HisF</shortName>
    </alternativeName>
</protein>